<name>CYB_DRONO</name>
<dbReference type="EMBL" id="U76052">
    <property type="protein sequence ID" value="AAB61318.1"/>
    <property type="molecule type" value="Genomic_DNA"/>
</dbReference>
<dbReference type="EMBL" id="AY016014">
    <property type="protein sequence ID" value="AAK08580.1"/>
    <property type="molecule type" value="Genomic_DNA"/>
</dbReference>
<dbReference type="EMBL" id="AF338711">
    <property type="protein sequence ID" value="AAK53298.1"/>
    <property type="molecule type" value="Genomic_DNA"/>
</dbReference>
<dbReference type="PIR" id="D90615">
    <property type="entry name" value="D90615"/>
</dbReference>
<dbReference type="RefSeq" id="NP_115439.1">
    <property type="nucleotide sequence ID" value="NC_002784.1"/>
</dbReference>
<dbReference type="SMR" id="O03523"/>
<dbReference type="GeneID" id="803256"/>
<dbReference type="KEGG" id="dne:803256"/>
<dbReference type="CTD" id="4519"/>
<dbReference type="OrthoDB" id="244at2759"/>
<dbReference type="Proteomes" id="UP000694423">
    <property type="component" value="Unplaced"/>
</dbReference>
<dbReference type="GO" id="GO:0005743">
    <property type="term" value="C:mitochondrial inner membrane"/>
    <property type="evidence" value="ECO:0007669"/>
    <property type="project" value="UniProtKB-SubCell"/>
</dbReference>
<dbReference type="GO" id="GO:0045275">
    <property type="term" value="C:respiratory chain complex III"/>
    <property type="evidence" value="ECO:0007669"/>
    <property type="project" value="InterPro"/>
</dbReference>
<dbReference type="GO" id="GO:0046872">
    <property type="term" value="F:metal ion binding"/>
    <property type="evidence" value="ECO:0007669"/>
    <property type="project" value="UniProtKB-KW"/>
</dbReference>
<dbReference type="GO" id="GO:0008121">
    <property type="term" value="F:ubiquinol-cytochrome-c reductase activity"/>
    <property type="evidence" value="ECO:0007669"/>
    <property type="project" value="InterPro"/>
</dbReference>
<dbReference type="GO" id="GO:0006122">
    <property type="term" value="P:mitochondrial electron transport, ubiquinol to cytochrome c"/>
    <property type="evidence" value="ECO:0007669"/>
    <property type="project" value="TreeGrafter"/>
</dbReference>
<dbReference type="CDD" id="cd00290">
    <property type="entry name" value="cytochrome_b_C"/>
    <property type="match status" value="1"/>
</dbReference>
<dbReference type="CDD" id="cd00284">
    <property type="entry name" value="Cytochrome_b_N"/>
    <property type="match status" value="1"/>
</dbReference>
<dbReference type="FunFam" id="1.20.810.10:FF:000002">
    <property type="entry name" value="Cytochrome b"/>
    <property type="match status" value="1"/>
</dbReference>
<dbReference type="Gene3D" id="1.20.810.10">
    <property type="entry name" value="Cytochrome Bc1 Complex, Chain C"/>
    <property type="match status" value="1"/>
</dbReference>
<dbReference type="InterPro" id="IPR005798">
    <property type="entry name" value="Cyt_b/b6_C"/>
</dbReference>
<dbReference type="InterPro" id="IPR036150">
    <property type="entry name" value="Cyt_b/b6_C_sf"/>
</dbReference>
<dbReference type="InterPro" id="IPR005797">
    <property type="entry name" value="Cyt_b/b6_N"/>
</dbReference>
<dbReference type="InterPro" id="IPR027387">
    <property type="entry name" value="Cytb/b6-like_sf"/>
</dbReference>
<dbReference type="InterPro" id="IPR030689">
    <property type="entry name" value="Cytochrome_b"/>
</dbReference>
<dbReference type="InterPro" id="IPR048260">
    <property type="entry name" value="Cytochrome_b_C_euk/bac"/>
</dbReference>
<dbReference type="InterPro" id="IPR048259">
    <property type="entry name" value="Cytochrome_b_N_euk/bac"/>
</dbReference>
<dbReference type="InterPro" id="IPR016174">
    <property type="entry name" value="Di-haem_cyt_TM"/>
</dbReference>
<dbReference type="PANTHER" id="PTHR19271">
    <property type="entry name" value="CYTOCHROME B"/>
    <property type="match status" value="1"/>
</dbReference>
<dbReference type="PANTHER" id="PTHR19271:SF16">
    <property type="entry name" value="CYTOCHROME B"/>
    <property type="match status" value="1"/>
</dbReference>
<dbReference type="Pfam" id="PF00032">
    <property type="entry name" value="Cytochrom_B_C"/>
    <property type="match status" value="1"/>
</dbReference>
<dbReference type="Pfam" id="PF00033">
    <property type="entry name" value="Cytochrome_B"/>
    <property type="match status" value="1"/>
</dbReference>
<dbReference type="PIRSF" id="PIRSF038885">
    <property type="entry name" value="COB"/>
    <property type="match status" value="1"/>
</dbReference>
<dbReference type="SUPFAM" id="SSF81648">
    <property type="entry name" value="a domain/subunit of cytochrome bc1 complex (Ubiquinol-cytochrome c reductase)"/>
    <property type="match status" value="1"/>
</dbReference>
<dbReference type="SUPFAM" id="SSF81342">
    <property type="entry name" value="Transmembrane di-heme cytochromes"/>
    <property type="match status" value="1"/>
</dbReference>
<dbReference type="PROSITE" id="PS51003">
    <property type="entry name" value="CYTB_CTER"/>
    <property type="match status" value="1"/>
</dbReference>
<dbReference type="PROSITE" id="PS51002">
    <property type="entry name" value="CYTB_NTER"/>
    <property type="match status" value="1"/>
</dbReference>
<protein>
    <recommendedName>
        <fullName>Cytochrome b</fullName>
    </recommendedName>
    <alternativeName>
        <fullName>Complex III subunit 3</fullName>
    </alternativeName>
    <alternativeName>
        <fullName>Complex III subunit III</fullName>
    </alternativeName>
    <alternativeName>
        <fullName>Cytochrome b-c1 complex subunit 3</fullName>
    </alternativeName>
    <alternativeName>
        <fullName>Ubiquinol-cytochrome-c reductase complex cytochrome b subunit</fullName>
    </alternativeName>
</protein>
<keyword id="KW-0249">Electron transport</keyword>
<keyword id="KW-0349">Heme</keyword>
<keyword id="KW-0408">Iron</keyword>
<keyword id="KW-0472">Membrane</keyword>
<keyword id="KW-0479">Metal-binding</keyword>
<keyword id="KW-0496">Mitochondrion</keyword>
<keyword id="KW-0999">Mitochondrion inner membrane</keyword>
<keyword id="KW-0679">Respiratory chain</keyword>
<keyword id="KW-0812">Transmembrane</keyword>
<keyword id="KW-1133">Transmembrane helix</keyword>
<keyword id="KW-0813">Transport</keyword>
<keyword id="KW-0830">Ubiquinone</keyword>
<comment type="function">
    <text evidence="2">Component of the ubiquinol-cytochrome c reductase complex (complex III or cytochrome b-c1 complex) that is part of the mitochondrial respiratory chain. The b-c1 complex mediates electron transfer from ubiquinol to cytochrome c. Contributes to the generation of a proton gradient across the mitochondrial membrane that is then used for ATP synthesis.</text>
</comment>
<comment type="cofactor">
    <cofactor evidence="2">
        <name>heme b</name>
        <dbReference type="ChEBI" id="CHEBI:60344"/>
    </cofactor>
    <text evidence="2">Binds 2 heme b groups non-covalently.</text>
</comment>
<comment type="subunit">
    <text evidence="2">The cytochrome bc1 complex contains 11 subunits: 3 respiratory subunits (MT-CYB, CYC1 and UQCRFS1), 2 core proteins (UQCRC1 and UQCRC2) and 6 low-molecular weight proteins (UQCRH/QCR6, UQCRB/QCR7, UQCRQ/QCR8, UQCR10/QCR9, UQCR11/QCR10 and a cleavage product of UQCRFS1). This cytochrome bc1 complex then forms a dimer.</text>
</comment>
<comment type="subcellular location">
    <subcellularLocation>
        <location evidence="2">Mitochondrion inner membrane</location>
        <topology evidence="2">Multi-pass membrane protein</topology>
    </subcellularLocation>
</comment>
<comment type="miscellaneous">
    <text evidence="1">Heme 1 (or BL or b562) is low-potential and absorbs at about 562 nm, and heme 2 (or BH or b566) is high-potential and absorbs at about 566 nm.</text>
</comment>
<comment type="similarity">
    <text evidence="3 4">Belongs to the cytochrome b family.</text>
</comment>
<comment type="caution">
    <text evidence="2">The full-length protein contains only eight transmembrane helices, not nine as predicted by bioinformatics tools.</text>
</comment>
<evidence type="ECO:0000250" key="1"/>
<evidence type="ECO:0000250" key="2">
    <source>
        <dbReference type="UniProtKB" id="P00157"/>
    </source>
</evidence>
<evidence type="ECO:0000255" key="3">
    <source>
        <dbReference type="PROSITE-ProRule" id="PRU00967"/>
    </source>
</evidence>
<evidence type="ECO:0000255" key="4">
    <source>
        <dbReference type="PROSITE-ProRule" id="PRU00968"/>
    </source>
</evidence>
<evidence type="ECO:0000305" key="5"/>
<proteinExistence type="inferred from homology"/>
<feature type="chain" id="PRO_0000060894" description="Cytochrome b">
    <location>
        <begin position="1"/>
        <end position="379"/>
    </location>
</feature>
<feature type="transmembrane region" description="Helical" evidence="2">
    <location>
        <begin position="34"/>
        <end position="54"/>
    </location>
</feature>
<feature type="transmembrane region" description="Helical" evidence="2">
    <location>
        <begin position="78"/>
        <end position="99"/>
    </location>
</feature>
<feature type="transmembrane region" description="Helical" evidence="2">
    <location>
        <begin position="114"/>
        <end position="134"/>
    </location>
</feature>
<feature type="transmembrane region" description="Helical" evidence="2">
    <location>
        <begin position="179"/>
        <end position="199"/>
    </location>
</feature>
<feature type="transmembrane region" description="Helical" evidence="2">
    <location>
        <begin position="227"/>
        <end position="247"/>
    </location>
</feature>
<feature type="transmembrane region" description="Helical" evidence="2">
    <location>
        <begin position="289"/>
        <end position="309"/>
    </location>
</feature>
<feature type="transmembrane region" description="Helical" evidence="2">
    <location>
        <begin position="321"/>
        <end position="341"/>
    </location>
</feature>
<feature type="transmembrane region" description="Helical" evidence="2">
    <location>
        <begin position="348"/>
        <end position="368"/>
    </location>
</feature>
<feature type="binding site" description="axial binding residue" evidence="2">
    <location>
        <position position="84"/>
    </location>
    <ligand>
        <name>heme b</name>
        <dbReference type="ChEBI" id="CHEBI:60344"/>
        <label>b562</label>
    </ligand>
    <ligandPart>
        <name>Fe</name>
        <dbReference type="ChEBI" id="CHEBI:18248"/>
    </ligandPart>
</feature>
<feature type="binding site" description="axial binding residue" evidence="2">
    <location>
        <position position="98"/>
    </location>
    <ligand>
        <name>heme b</name>
        <dbReference type="ChEBI" id="CHEBI:60344"/>
        <label>b566</label>
    </ligand>
    <ligandPart>
        <name>Fe</name>
        <dbReference type="ChEBI" id="CHEBI:18248"/>
    </ligandPart>
</feature>
<feature type="binding site" description="axial binding residue" evidence="2">
    <location>
        <position position="183"/>
    </location>
    <ligand>
        <name>heme b</name>
        <dbReference type="ChEBI" id="CHEBI:60344"/>
        <label>b562</label>
    </ligand>
    <ligandPart>
        <name>Fe</name>
        <dbReference type="ChEBI" id="CHEBI:18248"/>
    </ligandPart>
</feature>
<feature type="binding site" description="axial binding residue" evidence="2">
    <location>
        <position position="197"/>
    </location>
    <ligand>
        <name>heme b</name>
        <dbReference type="ChEBI" id="CHEBI:60344"/>
        <label>b566</label>
    </ligand>
    <ligandPart>
        <name>Fe</name>
        <dbReference type="ChEBI" id="CHEBI:18248"/>
    </ligandPart>
</feature>
<feature type="binding site" evidence="2">
    <location>
        <position position="202"/>
    </location>
    <ligand>
        <name>a ubiquinone</name>
        <dbReference type="ChEBI" id="CHEBI:16389"/>
    </ligand>
</feature>
<feature type="sequence conflict" description="In Ref. 3; AAK53298." evidence="5" ref="3">
    <original>I</original>
    <variation>V</variation>
    <location>
        <position position="335"/>
    </location>
</feature>
<organism>
    <name type="scientific">Dromaius novaehollandiae</name>
    <name type="common">Emu</name>
    <dbReference type="NCBI Taxonomy" id="8790"/>
    <lineage>
        <taxon>Eukaryota</taxon>
        <taxon>Metazoa</taxon>
        <taxon>Chordata</taxon>
        <taxon>Craniata</taxon>
        <taxon>Vertebrata</taxon>
        <taxon>Euteleostomi</taxon>
        <taxon>Archelosauria</taxon>
        <taxon>Archosauria</taxon>
        <taxon>Dinosauria</taxon>
        <taxon>Saurischia</taxon>
        <taxon>Theropoda</taxon>
        <taxon>Coelurosauria</taxon>
        <taxon>Aves</taxon>
        <taxon>Palaeognathae</taxon>
        <taxon>Casuariiformes</taxon>
        <taxon>Dromaiidae</taxon>
        <taxon>Dromaius</taxon>
    </lineage>
</organism>
<geneLocation type="mitochondrion"/>
<gene>
    <name type="primary">MT-CYB</name>
    <name type="synonym">COB</name>
    <name type="synonym">CYTB</name>
    <name type="synonym">MTCYB</name>
</gene>
<sequence>MAPNIRKSHPLLKIINNSLIDLPSPSNISAWWNFGSLLGICLITQILTGLLLAMHYTADTSLAFSSVAHTCRNVQYGWLIRNLHANGASFFFICIYLHIGRGFYYGSYLYKETWNTGVILLLTLMATAFVGYVLPWGQMSFWGATVITNLFSAIPYIGQTLVEWAWGGFSVDNPTLTRFFALHFLLPFLIAGITIIHLTFLHESGSNNPLGIVSHCDKIPFHPYFSLKDILGFTLMFIPLLILAFFSPNLLGDPENFTPANPLVTPPHIKPEWYFLFAYAILRSIPNKLGGVLALAASVLILFLIPFLHKSKQRSMTFRPLSQMLFWLLVANLLILTWIGSQPVEHPFIIIGQTASFTYFLILLILFPTIGALENKMLY</sequence>
<reference key="1">
    <citation type="book" date="1997" name="Avian molecular evolution and systematics">
        <title>Phylogenetic relationships of the ratite birds: resolving conflicts between molecular and morphological data sets.</title>
        <editorList>
            <person name="Mindell D.P."/>
        </editorList>
        <authorList>
            <person name="Lee K."/>
            <person name="Feinstein J."/>
            <person name="Cracraft J."/>
        </authorList>
    </citation>
    <scope>NUCLEOTIDE SEQUENCE [GENOMIC DNA]</scope>
</reference>
<reference key="2">
    <citation type="journal article" date="2001" name="Nature">
        <title>Complete mitochondrial genome sequences of two extinct moas clarify ratite evolution.</title>
        <authorList>
            <person name="Cooper A."/>
            <person name="Lalueza-Fox C."/>
            <person name="Anderson S."/>
            <person name="Rambaut A."/>
            <person name="Austin J."/>
            <person name="Ward R."/>
        </authorList>
    </citation>
    <scope>NUCLEOTIDE SEQUENCE [GENOMIC DNA]</scope>
    <source>
        <tissue>Muscle</tissue>
    </source>
</reference>
<reference key="3">
    <citation type="journal article" date="2001" name="Proc. R. Soc. B">
        <title>Complete mitochondrial DNA genome sequences of extinct birds: ratite phylogenetics and the vicariance biogeography hypothesis.</title>
        <authorList>
            <person name="Haddrath O."/>
            <person name="Baker A.J."/>
        </authorList>
    </citation>
    <scope>NUCLEOTIDE SEQUENCE [GENOMIC DNA]</scope>
</reference>
<accession>O03523</accession>
<accession>Q7HFB2</accession>
<accession>Q957Z9</accession>